<accession>P0DSO8</accession>
<reference key="1">
    <citation type="submission" date="2018-10" db="EMBL/GenBank/DDBJ databases">
        <title>Linked reads assembly of the African cheetah.</title>
        <authorList>
            <person name="Scott A."/>
            <person name="Pukazhenthi B."/>
            <person name="Koepfli K.-P."/>
            <person name="Mohr D."/>
            <person name="Crosier A."/>
            <person name="O'Brien S.J."/>
            <person name="Tamazian G."/>
            <person name="Dobrynin P."/>
            <person name="Komissarov A."/>
            <person name="Kliver S."/>
            <person name="Krasheninnikova K."/>
        </authorList>
    </citation>
    <scope>NUCLEOTIDE SEQUENCE [LARGE SCALE GENOMIC DNA]</scope>
</reference>
<reference key="2">
    <citation type="unpublished observations" date="2019-06">
        <authorList>
            <person name="Puppione D.L."/>
        </authorList>
    </citation>
    <scope>IDENTIFICATION</scope>
</reference>
<comment type="function">
    <text evidence="1">May have a role in chylomicrons and VLDL secretion and catabolism (By similarity). Required for efficient activation of lipoprotein lipase by ApoC-II; potent activator of LCAT (By similarity). Apoa-IV is a major component of HDL and chylomicrons (By similarity).</text>
</comment>
<comment type="subunit">
    <text evidence="1">Homodimer.</text>
</comment>
<comment type="subcellular location">
    <subcellularLocation>
        <location evidence="1">Secreted</location>
    </subcellularLocation>
</comment>
<comment type="domain">
    <text evidence="1">Nine of the thirteen 22-amino acid tandem repeats (each 22-mer is actually a tandem array of two, A and B, related 11-mers) occurring in this sequence are predicted to be highly alpha-helical, and many of these helices are amphipathic (By similarity). They may therefore serve as lipid-binding domains with lecithin:cholesterol acyltransferase (LCAT) activating abilities (By similarity).</text>
</comment>
<comment type="similarity">
    <text evidence="4">Belongs to the apolipoprotein A1/A4/E family.</text>
</comment>
<dbReference type="EMBL" id="QURD01003265">
    <property type="status" value="NOT_ANNOTATED_CDS"/>
    <property type="molecule type" value="Genomic_DNA"/>
</dbReference>
<dbReference type="SMR" id="P0DSO8"/>
<dbReference type="Proteomes" id="UP000504626">
    <property type="component" value="Unplaced"/>
</dbReference>
<dbReference type="GO" id="GO:0042627">
    <property type="term" value="C:chylomicron"/>
    <property type="evidence" value="ECO:0007669"/>
    <property type="project" value="UniProtKB-KW"/>
</dbReference>
<dbReference type="GO" id="GO:1903561">
    <property type="term" value="C:extracellular vesicle"/>
    <property type="evidence" value="ECO:0007669"/>
    <property type="project" value="TreeGrafter"/>
</dbReference>
<dbReference type="GO" id="GO:0034364">
    <property type="term" value="C:high-density lipoprotein particle"/>
    <property type="evidence" value="ECO:0007669"/>
    <property type="project" value="UniProtKB-KW"/>
</dbReference>
<dbReference type="GO" id="GO:0034362">
    <property type="term" value="C:low-density lipoprotein particle"/>
    <property type="evidence" value="ECO:0007669"/>
    <property type="project" value="TreeGrafter"/>
</dbReference>
<dbReference type="GO" id="GO:0034361">
    <property type="term" value="C:very-low-density lipoprotein particle"/>
    <property type="evidence" value="ECO:0007669"/>
    <property type="project" value="TreeGrafter"/>
</dbReference>
<dbReference type="GO" id="GO:0120020">
    <property type="term" value="F:cholesterol transfer activity"/>
    <property type="evidence" value="ECO:0007669"/>
    <property type="project" value="TreeGrafter"/>
</dbReference>
<dbReference type="GO" id="GO:0060228">
    <property type="term" value="F:phosphatidylcholine-sterol O-acyltransferase activator activity"/>
    <property type="evidence" value="ECO:0007669"/>
    <property type="project" value="TreeGrafter"/>
</dbReference>
<dbReference type="GO" id="GO:0005543">
    <property type="term" value="F:phospholipid binding"/>
    <property type="evidence" value="ECO:0007669"/>
    <property type="project" value="TreeGrafter"/>
</dbReference>
<dbReference type="GO" id="GO:0055090">
    <property type="term" value="P:acylglycerol homeostasis"/>
    <property type="evidence" value="ECO:0007669"/>
    <property type="project" value="TreeGrafter"/>
</dbReference>
<dbReference type="GO" id="GO:0033344">
    <property type="term" value="P:cholesterol efflux"/>
    <property type="evidence" value="ECO:0007669"/>
    <property type="project" value="TreeGrafter"/>
</dbReference>
<dbReference type="GO" id="GO:0008203">
    <property type="term" value="P:cholesterol metabolic process"/>
    <property type="evidence" value="ECO:0007669"/>
    <property type="project" value="TreeGrafter"/>
</dbReference>
<dbReference type="GO" id="GO:0042157">
    <property type="term" value="P:lipoprotein metabolic process"/>
    <property type="evidence" value="ECO:0007669"/>
    <property type="project" value="InterPro"/>
</dbReference>
<dbReference type="GO" id="GO:0033700">
    <property type="term" value="P:phospholipid efflux"/>
    <property type="evidence" value="ECO:0007669"/>
    <property type="project" value="TreeGrafter"/>
</dbReference>
<dbReference type="FunFam" id="1.20.120.20:FF:000004">
    <property type="entry name" value="Apolipoprotein A-IV"/>
    <property type="match status" value="1"/>
</dbReference>
<dbReference type="FunFam" id="1.20.120.20:FF:000005">
    <property type="entry name" value="Apolipoprotein A-IV"/>
    <property type="match status" value="1"/>
</dbReference>
<dbReference type="Gene3D" id="1.20.120.20">
    <property type="entry name" value="Apolipoprotein"/>
    <property type="match status" value="2"/>
</dbReference>
<dbReference type="InterPro" id="IPR000074">
    <property type="entry name" value="ApoA_E"/>
</dbReference>
<dbReference type="InterPro" id="IPR050163">
    <property type="entry name" value="Apolipoprotein_A1/A4/E"/>
</dbReference>
<dbReference type="PANTHER" id="PTHR18976">
    <property type="entry name" value="APOLIPOPROTEIN"/>
    <property type="match status" value="1"/>
</dbReference>
<dbReference type="PANTHER" id="PTHR18976:SF1">
    <property type="entry name" value="APOLIPOPROTEIN A-IV"/>
    <property type="match status" value="1"/>
</dbReference>
<dbReference type="Pfam" id="PF01442">
    <property type="entry name" value="Apolipoprotein"/>
    <property type="match status" value="1"/>
</dbReference>
<dbReference type="SUPFAM" id="SSF58113">
    <property type="entry name" value="Apolipoprotein A-I"/>
    <property type="match status" value="2"/>
</dbReference>
<organism>
    <name type="scientific">Acinonyx jubatus</name>
    <name type="common">Cheetah</name>
    <dbReference type="NCBI Taxonomy" id="32536"/>
    <lineage>
        <taxon>Eukaryota</taxon>
        <taxon>Metazoa</taxon>
        <taxon>Chordata</taxon>
        <taxon>Craniata</taxon>
        <taxon>Vertebrata</taxon>
        <taxon>Euteleostomi</taxon>
        <taxon>Mammalia</taxon>
        <taxon>Eutheria</taxon>
        <taxon>Laurasiatheria</taxon>
        <taxon>Carnivora</taxon>
        <taxon>Feliformia</taxon>
        <taxon>Felidae</taxon>
        <taxon>Felinae</taxon>
        <taxon>Acinonyx</taxon>
    </lineage>
</organism>
<gene>
    <name type="primary">APOA4</name>
</gene>
<protein>
    <recommendedName>
        <fullName>Apolipoprotein A-IV</fullName>
        <shortName>Apo-AIV</shortName>
        <shortName>ApoA-IV</shortName>
    </recommendedName>
    <alternativeName>
        <fullName>Apolipoprotein A4</fullName>
    </alternativeName>
</protein>
<proteinExistence type="inferred from homology"/>
<feature type="signal peptide" evidence="2">
    <location>
        <begin position="1"/>
        <end position="20"/>
    </location>
</feature>
<feature type="chain" id="PRO_0000447661" description="Apolipoprotein A-IV">
    <location>
        <begin position="21"/>
        <end position="382"/>
    </location>
</feature>
<feature type="repeat" description="1">
    <location>
        <begin position="33"/>
        <end position="54"/>
    </location>
</feature>
<feature type="repeat" description="2">
    <location>
        <begin position="60"/>
        <end position="81"/>
    </location>
</feature>
<feature type="repeat" description="3">
    <location>
        <begin position="82"/>
        <end position="103"/>
    </location>
</feature>
<feature type="repeat" description="4">
    <location>
        <begin position="115"/>
        <end position="136"/>
    </location>
</feature>
<feature type="repeat" description="5">
    <location>
        <begin position="137"/>
        <end position="158"/>
    </location>
</feature>
<feature type="repeat" description="6">
    <location>
        <begin position="159"/>
        <end position="180"/>
    </location>
</feature>
<feature type="repeat" description="7">
    <location>
        <begin position="181"/>
        <end position="202"/>
    </location>
</feature>
<feature type="repeat" description="8">
    <location>
        <begin position="203"/>
        <end position="224"/>
    </location>
</feature>
<feature type="repeat" description="9">
    <location>
        <begin position="225"/>
        <end position="246"/>
    </location>
</feature>
<feature type="repeat" description="10">
    <location>
        <begin position="247"/>
        <end position="268"/>
    </location>
</feature>
<feature type="repeat" description="11">
    <location>
        <begin position="269"/>
        <end position="286"/>
    </location>
</feature>
<feature type="repeat" description="12">
    <location>
        <begin position="287"/>
        <end position="308"/>
    </location>
</feature>
<feature type="repeat" description="13">
    <location>
        <begin position="309"/>
        <end position="330"/>
    </location>
</feature>
<feature type="region of interest" description="13 X 22 AA approximate tandem repeats">
    <location>
        <begin position="33"/>
        <end position="330"/>
    </location>
</feature>
<feature type="region of interest" description="Disordered" evidence="3">
    <location>
        <begin position="362"/>
        <end position="382"/>
    </location>
</feature>
<evidence type="ECO:0000250" key="1">
    <source>
        <dbReference type="UniProtKB" id="P06727"/>
    </source>
</evidence>
<evidence type="ECO:0000255" key="2"/>
<evidence type="ECO:0000256" key="3">
    <source>
        <dbReference type="SAM" id="MobiDB-lite"/>
    </source>
</evidence>
<evidence type="ECO:0000305" key="4"/>
<name>APOA4_ACIJB</name>
<sequence length="382" mass="43722">MFLRAVVLTLALVAVTGARAEVSPDQVATVVWDYFSQLSNNAKEAVEHLQQSELTQQLNALFQDKLGQVNTYADNLQKKLVPFATELHERLTKDSEKLKEEIRKELEELRARLLPHANEVSQKIGDNVRELQQRLGPYADELRTQVNTHAEHLRRHLTSHAQRMEAVLRENVDNLQSSLTPYADEFKAKIDRNIEELKGHLTPYADELKVKIDQNVEELRRSLAPYAQDVQEKLNHQLEGLAFQMKKNAEELKAKITANADELRQRLAPVVEDVRGKLRDNAKGLQESLAQLNSHLDRQVEEFRHNMGPYGDTFNRALVQQVEELRQKLGSYAGGMEDHLSFLEKDLRDKVNSFFSTLKEKENQDMPLALPEQEQAPGPLES</sequence>
<keyword id="KW-0162">Chylomicron</keyword>
<keyword id="KW-0345">HDL</keyword>
<keyword id="KW-0445">Lipid transport</keyword>
<keyword id="KW-1185">Reference proteome</keyword>
<keyword id="KW-0677">Repeat</keyword>
<keyword id="KW-0964">Secreted</keyword>
<keyword id="KW-0732">Signal</keyword>
<keyword id="KW-0813">Transport</keyword>